<name>TRMB_LYSSC</name>
<comment type="function">
    <text evidence="2">Catalyzes the formation of N(7)-methylguanine at position 46 (m7G46) in tRNA.</text>
</comment>
<comment type="catalytic activity">
    <reaction evidence="2">
        <text>guanosine(46) in tRNA + S-adenosyl-L-methionine = N(7)-methylguanosine(46) in tRNA + S-adenosyl-L-homocysteine</text>
        <dbReference type="Rhea" id="RHEA:42708"/>
        <dbReference type="Rhea" id="RHEA-COMP:10188"/>
        <dbReference type="Rhea" id="RHEA-COMP:10189"/>
        <dbReference type="ChEBI" id="CHEBI:57856"/>
        <dbReference type="ChEBI" id="CHEBI:59789"/>
        <dbReference type="ChEBI" id="CHEBI:74269"/>
        <dbReference type="ChEBI" id="CHEBI:74480"/>
        <dbReference type="EC" id="2.1.1.33"/>
    </reaction>
</comment>
<comment type="pathway">
    <text evidence="2">tRNA modification; N(7)-methylguanine-tRNA biosynthesis.</text>
</comment>
<comment type="similarity">
    <text evidence="2">Belongs to the class I-like SAM-binding methyltransferase superfamily. TrmB family.</text>
</comment>
<evidence type="ECO:0000250" key="1"/>
<evidence type="ECO:0000255" key="2">
    <source>
        <dbReference type="HAMAP-Rule" id="MF_01057"/>
    </source>
</evidence>
<reference key="1">
    <citation type="journal article" date="2008" name="J. Bacteriol.">
        <title>Complete genome sequence of the mosquitocidal bacterium Bacillus sphaericus C3-41 and comparison with those of closely related Bacillus species.</title>
        <authorList>
            <person name="Hu X."/>
            <person name="Fan W."/>
            <person name="Han B."/>
            <person name="Liu H."/>
            <person name="Zheng D."/>
            <person name="Li Q."/>
            <person name="Dong W."/>
            <person name="Yan J."/>
            <person name="Gao M."/>
            <person name="Berry C."/>
            <person name="Yuan Z."/>
        </authorList>
    </citation>
    <scope>NUCLEOTIDE SEQUENCE [LARGE SCALE GENOMIC DNA]</scope>
    <source>
        <strain>C3-41</strain>
    </source>
</reference>
<keyword id="KW-0489">Methyltransferase</keyword>
<keyword id="KW-0949">S-adenosyl-L-methionine</keyword>
<keyword id="KW-0808">Transferase</keyword>
<keyword id="KW-0819">tRNA processing</keyword>
<organism>
    <name type="scientific">Lysinibacillus sphaericus (strain C3-41)</name>
    <dbReference type="NCBI Taxonomy" id="444177"/>
    <lineage>
        <taxon>Bacteria</taxon>
        <taxon>Bacillati</taxon>
        <taxon>Bacillota</taxon>
        <taxon>Bacilli</taxon>
        <taxon>Bacillales</taxon>
        <taxon>Bacillaceae</taxon>
        <taxon>Lysinibacillus</taxon>
    </lineage>
</organism>
<proteinExistence type="inferred from homology"/>
<feature type="chain" id="PRO_1000136355" description="tRNA (guanine-N(7)-)-methyltransferase">
    <location>
        <begin position="1"/>
        <end position="216"/>
    </location>
</feature>
<feature type="active site" evidence="1">
    <location>
        <position position="119"/>
    </location>
</feature>
<feature type="binding site" evidence="2">
    <location>
        <position position="44"/>
    </location>
    <ligand>
        <name>S-adenosyl-L-methionine</name>
        <dbReference type="ChEBI" id="CHEBI:59789"/>
    </ligand>
</feature>
<feature type="binding site" evidence="2">
    <location>
        <position position="69"/>
    </location>
    <ligand>
        <name>S-adenosyl-L-methionine</name>
        <dbReference type="ChEBI" id="CHEBI:59789"/>
    </ligand>
</feature>
<feature type="binding site" evidence="2">
    <location>
        <position position="97"/>
    </location>
    <ligand>
        <name>S-adenosyl-L-methionine</name>
        <dbReference type="ChEBI" id="CHEBI:59789"/>
    </ligand>
</feature>
<feature type="binding site" evidence="2">
    <location>
        <position position="119"/>
    </location>
    <ligand>
        <name>S-adenosyl-L-methionine</name>
        <dbReference type="ChEBI" id="CHEBI:59789"/>
    </ligand>
</feature>
<feature type="binding site" evidence="2">
    <location>
        <position position="123"/>
    </location>
    <ligand>
        <name>substrate</name>
    </ligand>
</feature>
<feature type="binding site" evidence="2">
    <location>
        <position position="155"/>
    </location>
    <ligand>
        <name>substrate</name>
    </ligand>
</feature>
<feature type="binding site" evidence="2">
    <location>
        <begin position="192"/>
        <end position="195"/>
    </location>
    <ligand>
        <name>substrate</name>
    </ligand>
</feature>
<accession>B1HXA1</accession>
<dbReference type="EC" id="2.1.1.33" evidence="2"/>
<dbReference type="EMBL" id="CP000817">
    <property type="protein sequence ID" value="ACA41677.1"/>
    <property type="molecule type" value="Genomic_DNA"/>
</dbReference>
<dbReference type="RefSeq" id="WP_012295706.1">
    <property type="nucleotide sequence ID" value="NC_010382.1"/>
</dbReference>
<dbReference type="SMR" id="B1HXA1"/>
<dbReference type="EnsemblBacteria" id="ACA41677">
    <property type="protein sequence ID" value="ACA41677"/>
    <property type="gene ID" value="Bsph_4216"/>
</dbReference>
<dbReference type="KEGG" id="lsp:Bsph_4216"/>
<dbReference type="HOGENOM" id="CLU_050910_2_1_9"/>
<dbReference type="UniPathway" id="UPA00989"/>
<dbReference type="Proteomes" id="UP000002164">
    <property type="component" value="Chromosome"/>
</dbReference>
<dbReference type="GO" id="GO:0043527">
    <property type="term" value="C:tRNA methyltransferase complex"/>
    <property type="evidence" value="ECO:0007669"/>
    <property type="project" value="TreeGrafter"/>
</dbReference>
<dbReference type="GO" id="GO:0008176">
    <property type="term" value="F:tRNA (guanine(46)-N7)-methyltransferase activity"/>
    <property type="evidence" value="ECO:0007669"/>
    <property type="project" value="UniProtKB-UniRule"/>
</dbReference>
<dbReference type="FunFam" id="3.40.50.150:FF:000035">
    <property type="entry name" value="tRNA (guanine-N(7)-)-methyltransferase"/>
    <property type="match status" value="1"/>
</dbReference>
<dbReference type="Gene3D" id="3.40.50.150">
    <property type="entry name" value="Vaccinia Virus protein VP39"/>
    <property type="match status" value="1"/>
</dbReference>
<dbReference type="HAMAP" id="MF_01057">
    <property type="entry name" value="tRNA_methyltr_TrmB"/>
    <property type="match status" value="1"/>
</dbReference>
<dbReference type="InterPro" id="IPR029063">
    <property type="entry name" value="SAM-dependent_MTases_sf"/>
</dbReference>
<dbReference type="InterPro" id="IPR003358">
    <property type="entry name" value="tRNA_(Gua-N-7)_MeTrfase_Trmb"/>
</dbReference>
<dbReference type="InterPro" id="IPR055361">
    <property type="entry name" value="tRNA_methyltr_TrmB_bact"/>
</dbReference>
<dbReference type="NCBIfam" id="NF001080">
    <property type="entry name" value="PRK00121.2-2"/>
    <property type="match status" value="1"/>
</dbReference>
<dbReference type="NCBIfam" id="TIGR00091">
    <property type="entry name" value="tRNA (guanosine(46)-N7)-methyltransferase TrmB"/>
    <property type="match status" value="1"/>
</dbReference>
<dbReference type="PANTHER" id="PTHR23417">
    <property type="entry name" value="3-DEOXY-D-MANNO-OCTULOSONIC-ACID TRANSFERASE/TRNA GUANINE-N 7 - -METHYLTRANSFERASE"/>
    <property type="match status" value="1"/>
</dbReference>
<dbReference type="PANTHER" id="PTHR23417:SF14">
    <property type="entry name" value="PENTACOTRIPEPTIDE-REPEAT REGION OF PRORP DOMAIN-CONTAINING PROTEIN"/>
    <property type="match status" value="1"/>
</dbReference>
<dbReference type="Pfam" id="PF02390">
    <property type="entry name" value="Methyltransf_4"/>
    <property type="match status" value="1"/>
</dbReference>
<dbReference type="SUPFAM" id="SSF53335">
    <property type="entry name" value="S-adenosyl-L-methionine-dependent methyltransferases"/>
    <property type="match status" value="1"/>
</dbReference>
<dbReference type="PROSITE" id="PS51625">
    <property type="entry name" value="SAM_MT_TRMB"/>
    <property type="match status" value="1"/>
</dbReference>
<sequence length="216" mass="24847">MRLRNKPWAEEMITNHPEVIVPNPEDFKGNWQVVFGNNNPIHIEVGTGKGQFVTGMALQNPDINYIGIELYDSVIVCALEKVLEAKSPANLRLLKVNGADLNKFFNKNDVARVYLNFSDPWPKTRHAKRRLTHGDFLKLYESILVDNGEIHFKTDNRGLFEFSLISISEYGMLLKYVSLDLHANMPEDNVMTEYEQKFSAKGQPIYRLESQFITKL</sequence>
<gene>
    <name evidence="2" type="primary">trmB</name>
    <name type="ordered locus">Bsph_4216</name>
</gene>
<protein>
    <recommendedName>
        <fullName evidence="2">tRNA (guanine-N(7)-)-methyltransferase</fullName>
        <ecNumber evidence="2">2.1.1.33</ecNumber>
    </recommendedName>
    <alternativeName>
        <fullName evidence="2">tRNA (guanine(46)-N(7))-methyltransferase</fullName>
    </alternativeName>
    <alternativeName>
        <fullName evidence="2">tRNA(m7G46)-methyltransferase</fullName>
    </alternativeName>
</protein>